<dbReference type="EMBL" id="U82626">
    <property type="protein sequence ID" value="AAB96342.1"/>
    <property type="molecule type" value="mRNA"/>
</dbReference>
<dbReference type="SMR" id="P97690"/>
<dbReference type="FunCoup" id="P97690">
    <property type="interactions" value="4213"/>
</dbReference>
<dbReference type="IntAct" id="P97690">
    <property type="interactions" value="2"/>
</dbReference>
<dbReference type="STRING" id="10116.ENSRNOP00000019560"/>
<dbReference type="iPTMnet" id="P97690"/>
<dbReference type="PhosphoSitePlus" id="P97690"/>
<dbReference type="jPOST" id="P97690"/>
<dbReference type="PaxDb" id="10116-ENSRNOP00000019560"/>
<dbReference type="PeptideAtlas" id="P97690"/>
<dbReference type="UCSC" id="RGD:62006">
    <property type="organism name" value="rat"/>
</dbReference>
<dbReference type="AGR" id="RGD:62006"/>
<dbReference type="RGD" id="62006">
    <property type="gene designation" value="Smc3"/>
</dbReference>
<dbReference type="eggNOG" id="KOG0964">
    <property type="taxonomic scope" value="Eukaryota"/>
</dbReference>
<dbReference type="InParanoid" id="P97690"/>
<dbReference type="Reactome" id="R-RNO-2467813">
    <property type="pathway name" value="Separation of Sister Chromatids"/>
</dbReference>
<dbReference type="Reactome" id="R-RNO-2468052">
    <property type="pathway name" value="Establishment of Sister Chromatid Cohesion"/>
</dbReference>
<dbReference type="Reactome" id="R-RNO-2470946">
    <property type="pathway name" value="Cohesin Loading onto Chromatin"/>
</dbReference>
<dbReference type="Reactome" id="R-RNO-2500257">
    <property type="pathway name" value="Resolution of Sister Chromatid Cohesion"/>
</dbReference>
<dbReference type="Reactome" id="R-RNO-3108214">
    <property type="pathway name" value="SUMOylation of DNA damage response and repair proteins"/>
</dbReference>
<dbReference type="PRO" id="PR:P97690"/>
<dbReference type="Proteomes" id="UP000002494">
    <property type="component" value="Unplaced"/>
</dbReference>
<dbReference type="GO" id="GO:0005604">
    <property type="term" value="C:basement membrane"/>
    <property type="evidence" value="ECO:0000314"/>
    <property type="project" value="RGD"/>
</dbReference>
<dbReference type="GO" id="GO:0000785">
    <property type="term" value="C:chromatin"/>
    <property type="evidence" value="ECO:0000250"/>
    <property type="project" value="UniProtKB"/>
</dbReference>
<dbReference type="GO" id="GO:0000775">
    <property type="term" value="C:chromosome, centromeric region"/>
    <property type="evidence" value="ECO:0007669"/>
    <property type="project" value="UniProtKB-SubCell"/>
</dbReference>
<dbReference type="GO" id="GO:0008278">
    <property type="term" value="C:cohesin complex"/>
    <property type="evidence" value="ECO:0000266"/>
    <property type="project" value="RGD"/>
</dbReference>
<dbReference type="GO" id="GO:0000800">
    <property type="term" value="C:lateral element"/>
    <property type="evidence" value="ECO:0000266"/>
    <property type="project" value="RGD"/>
</dbReference>
<dbReference type="GO" id="GO:0030893">
    <property type="term" value="C:meiotic cohesin complex"/>
    <property type="evidence" value="ECO:0000250"/>
    <property type="project" value="UniProtKB"/>
</dbReference>
<dbReference type="GO" id="GO:0030892">
    <property type="term" value="C:mitotic cohesin complex"/>
    <property type="evidence" value="ECO:0000266"/>
    <property type="project" value="RGD"/>
</dbReference>
<dbReference type="GO" id="GO:0097431">
    <property type="term" value="C:mitotic spindle pole"/>
    <property type="evidence" value="ECO:0000250"/>
    <property type="project" value="UniProtKB"/>
</dbReference>
<dbReference type="GO" id="GO:0016363">
    <property type="term" value="C:nuclear matrix"/>
    <property type="evidence" value="ECO:0000250"/>
    <property type="project" value="UniProtKB"/>
</dbReference>
<dbReference type="GO" id="GO:0005634">
    <property type="term" value="C:nucleus"/>
    <property type="evidence" value="ECO:0000266"/>
    <property type="project" value="RGD"/>
</dbReference>
<dbReference type="GO" id="GO:0000795">
    <property type="term" value="C:synaptonemal complex"/>
    <property type="evidence" value="ECO:0000314"/>
    <property type="project" value="RGD"/>
</dbReference>
<dbReference type="GO" id="GO:0005524">
    <property type="term" value="F:ATP binding"/>
    <property type="evidence" value="ECO:0007669"/>
    <property type="project" value="UniProtKB-KW"/>
</dbReference>
<dbReference type="GO" id="GO:0016887">
    <property type="term" value="F:ATP hydrolysis activity"/>
    <property type="evidence" value="ECO:0007669"/>
    <property type="project" value="InterPro"/>
</dbReference>
<dbReference type="GO" id="GO:0048487">
    <property type="term" value="F:beta-tubulin binding"/>
    <property type="evidence" value="ECO:0000266"/>
    <property type="project" value="RGD"/>
</dbReference>
<dbReference type="GO" id="GO:0003682">
    <property type="term" value="F:chromatin binding"/>
    <property type="evidence" value="ECO:0000266"/>
    <property type="project" value="RGD"/>
</dbReference>
<dbReference type="GO" id="GO:0000987">
    <property type="term" value="F:cis-regulatory region sequence-specific DNA binding"/>
    <property type="evidence" value="ECO:0000266"/>
    <property type="project" value="RGD"/>
</dbReference>
<dbReference type="GO" id="GO:0003690">
    <property type="term" value="F:double-stranded DNA binding"/>
    <property type="evidence" value="ECO:0000318"/>
    <property type="project" value="GO_Central"/>
</dbReference>
<dbReference type="GO" id="GO:0070840">
    <property type="term" value="F:dynein complex binding"/>
    <property type="evidence" value="ECO:0000250"/>
    <property type="project" value="UniProtKB"/>
</dbReference>
<dbReference type="GO" id="GO:0036033">
    <property type="term" value="F:mediator complex binding"/>
    <property type="evidence" value="ECO:0000266"/>
    <property type="project" value="RGD"/>
</dbReference>
<dbReference type="GO" id="GO:0046982">
    <property type="term" value="F:protein heterodimerization activity"/>
    <property type="evidence" value="ECO:0000266"/>
    <property type="project" value="RGD"/>
</dbReference>
<dbReference type="GO" id="GO:0051301">
    <property type="term" value="P:cell division"/>
    <property type="evidence" value="ECO:0007669"/>
    <property type="project" value="UniProtKB-KW"/>
</dbReference>
<dbReference type="GO" id="GO:0006281">
    <property type="term" value="P:DNA repair"/>
    <property type="evidence" value="ECO:0007669"/>
    <property type="project" value="UniProtKB-KW"/>
</dbReference>
<dbReference type="GO" id="GO:0051321">
    <property type="term" value="P:meiotic cell cycle"/>
    <property type="evidence" value="ECO:0000270"/>
    <property type="project" value="RGD"/>
</dbReference>
<dbReference type="GO" id="GO:0007064">
    <property type="term" value="P:mitotic sister chromatid cohesion"/>
    <property type="evidence" value="ECO:0000318"/>
    <property type="project" value="GO_Central"/>
</dbReference>
<dbReference type="GO" id="GO:0090307">
    <property type="term" value="P:mitotic spindle assembly"/>
    <property type="evidence" value="ECO:0000266"/>
    <property type="project" value="RGD"/>
</dbReference>
<dbReference type="GO" id="GO:0006275">
    <property type="term" value="P:regulation of DNA replication"/>
    <property type="evidence" value="ECO:0000250"/>
    <property type="project" value="UniProtKB"/>
</dbReference>
<dbReference type="GO" id="GO:0007062">
    <property type="term" value="P:sister chromatid cohesion"/>
    <property type="evidence" value="ECO:0000266"/>
    <property type="project" value="RGD"/>
</dbReference>
<dbReference type="GO" id="GO:0019827">
    <property type="term" value="P:stem cell population maintenance"/>
    <property type="evidence" value="ECO:0000266"/>
    <property type="project" value="RGD"/>
</dbReference>
<dbReference type="CDD" id="cd03272">
    <property type="entry name" value="ABC_SMC3_euk"/>
    <property type="match status" value="1"/>
</dbReference>
<dbReference type="FunFam" id="1.20.1060.20:FF:000002">
    <property type="entry name" value="Structural maintenance of chromosomes 3"/>
    <property type="match status" value="1"/>
</dbReference>
<dbReference type="FunFam" id="3.30.70.1620:FF:000002">
    <property type="entry name" value="Structural maintenance of chromosomes 3"/>
    <property type="match status" value="1"/>
</dbReference>
<dbReference type="FunFam" id="3.40.50.300:FF:000370">
    <property type="entry name" value="Structural maintenance of chromosomes 3"/>
    <property type="match status" value="1"/>
</dbReference>
<dbReference type="FunFam" id="3.40.50.300:FF:000424">
    <property type="entry name" value="Structural maintenance of chromosomes 3"/>
    <property type="match status" value="1"/>
</dbReference>
<dbReference type="Gene3D" id="1.10.287.1490">
    <property type="match status" value="1"/>
</dbReference>
<dbReference type="Gene3D" id="1.20.1060.20">
    <property type="match status" value="1"/>
</dbReference>
<dbReference type="Gene3D" id="3.30.70.1620">
    <property type="match status" value="1"/>
</dbReference>
<dbReference type="Gene3D" id="3.40.50.300">
    <property type="entry name" value="P-loop containing nucleotide triphosphate hydrolases"/>
    <property type="match status" value="2"/>
</dbReference>
<dbReference type="InterPro" id="IPR027417">
    <property type="entry name" value="P-loop_NTPase"/>
</dbReference>
<dbReference type="InterPro" id="IPR003395">
    <property type="entry name" value="RecF/RecN/SMC_N"/>
</dbReference>
<dbReference type="InterPro" id="IPR024704">
    <property type="entry name" value="SMC"/>
</dbReference>
<dbReference type="InterPro" id="IPR041741">
    <property type="entry name" value="SMC3_ABC_euk"/>
</dbReference>
<dbReference type="InterPro" id="IPR010935">
    <property type="entry name" value="SMC_hinge"/>
</dbReference>
<dbReference type="InterPro" id="IPR036277">
    <property type="entry name" value="SMC_hinge_sf"/>
</dbReference>
<dbReference type="PANTHER" id="PTHR43977">
    <property type="entry name" value="STRUCTURAL MAINTENANCE OF CHROMOSOMES PROTEIN 3"/>
    <property type="match status" value="1"/>
</dbReference>
<dbReference type="Pfam" id="PF06470">
    <property type="entry name" value="SMC_hinge"/>
    <property type="match status" value="1"/>
</dbReference>
<dbReference type="Pfam" id="PF02463">
    <property type="entry name" value="SMC_N"/>
    <property type="match status" value="1"/>
</dbReference>
<dbReference type="PIRSF" id="PIRSF005719">
    <property type="entry name" value="SMC"/>
    <property type="match status" value="1"/>
</dbReference>
<dbReference type="SMART" id="SM00968">
    <property type="entry name" value="SMC_hinge"/>
    <property type="match status" value="1"/>
</dbReference>
<dbReference type="SUPFAM" id="SSF52540">
    <property type="entry name" value="P-loop containing nucleoside triphosphate hydrolases"/>
    <property type="match status" value="1"/>
</dbReference>
<dbReference type="SUPFAM" id="SSF75553">
    <property type="entry name" value="Smc hinge domain"/>
    <property type="match status" value="1"/>
</dbReference>
<keyword id="KW-0007">Acetylation</keyword>
<keyword id="KW-0067">ATP-binding</keyword>
<keyword id="KW-0131">Cell cycle</keyword>
<keyword id="KW-0132">Cell division</keyword>
<keyword id="KW-0137">Centromere</keyword>
<keyword id="KW-0158">Chromosome</keyword>
<keyword id="KW-0175">Coiled coil</keyword>
<keyword id="KW-0903">Direct protein sequencing</keyword>
<keyword id="KW-0227">DNA damage</keyword>
<keyword id="KW-0234">DNA repair</keyword>
<keyword id="KW-0469">Meiosis</keyword>
<keyword id="KW-0498">Mitosis</keyword>
<keyword id="KW-0547">Nucleotide-binding</keyword>
<keyword id="KW-0539">Nucleus</keyword>
<keyword id="KW-0597">Phosphoprotein</keyword>
<keyword id="KW-1185">Reference proteome</keyword>
<keyword id="KW-0832">Ubl conjugation</keyword>
<evidence type="ECO:0000250" key="1"/>
<evidence type="ECO:0000250" key="2">
    <source>
        <dbReference type="UniProtKB" id="O97594"/>
    </source>
</evidence>
<evidence type="ECO:0000250" key="3">
    <source>
        <dbReference type="UniProtKB" id="Q9CW03"/>
    </source>
</evidence>
<evidence type="ECO:0000250" key="4">
    <source>
        <dbReference type="UniProtKB" id="Q9UQE7"/>
    </source>
</evidence>
<evidence type="ECO:0000255" key="5"/>
<evidence type="ECO:0000256" key="6">
    <source>
        <dbReference type="SAM" id="MobiDB-lite"/>
    </source>
</evidence>
<evidence type="ECO:0000269" key="7">
    <source>
    </source>
</evidence>
<evidence type="ECO:0000305" key="8"/>
<evidence type="ECO:0007744" key="9">
    <source>
    </source>
</evidence>
<proteinExistence type="evidence at protein level"/>
<accession>P97690</accession>
<reference key="1">
    <citation type="journal article" date="1997" name="J. Cell Biol.">
        <title>cDNA cloning of the basement membrane chondroitin sulfate proteoglycan core protein, bamacan: a five domain structure including coiled-coil motifs.</title>
        <authorList>
            <person name="Wu R.-R."/>
            <person name="Couchman J.R."/>
        </authorList>
    </citation>
    <scope>NUCLEOTIDE SEQUENCE [MRNA]</scope>
    <source>
        <tissue>Yolk sac carcinoma</tissue>
    </source>
</reference>
<reference key="2">
    <citation type="submission" date="2007-09" db="UniProtKB">
        <authorList>
            <person name="Lubec G."/>
            <person name="Kang S.U."/>
            <person name="Lubec S."/>
        </authorList>
    </citation>
    <scope>PROTEIN SEQUENCE OF 437-447 AND 462-469</scope>
    <scope>IDENTIFICATION BY MASS SPECTROMETRY</scope>
    <source>
        <strain>Sprague-Dawley</strain>
        <tissue>Brain</tissue>
    </source>
</reference>
<reference key="3">
    <citation type="journal article" date="2000" name="J. Cell Sci.">
        <title>Association of mammalian SMC1 and SMC3 proteins with meiotic chromosomes and synaptonemal complexes.</title>
        <authorList>
            <person name="Eijpe M."/>
            <person name="Heyting C."/>
            <person name="Gross B."/>
            <person name="Jessberger R."/>
        </authorList>
    </citation>
    <scope>INTERACTION WITH SYCP2</scope>
</reference>
<reference key="4">
    <citation type="journal article" date="2012" name="Nat. Commun.">
        <title>Quantitative maps of protein phosphorylation sites across 14 different rat organs and tissues.</title>
        <authorList>
            <person name="Lundby A."/>
            <person name="Secher A."/>
            <person name="Lage K."/>
            <person name="Nordsborg N.B."/>
            <person name="Dmytriyev A."/>
            <person name="Lundby C."/>
            <person name="Olsen J.V."/>
        </authorList>
    </citation>
    <scope>PHOSPHORYLATION [LARGE SCALE ANALYSIS] AT SER-1067 AND SER-1074</scope>
    <scope>IDENTIFICATION BY MASS SPECTROMETRY [LARGE SCALE ANALYSIS]</scope>
</reference>
<gene>
    <name type="primary">Smc3</name>
    <name type="synonym">Bam</name>
    <name type="synonym">Bmh</name>
    <name type="synonym">Cspg6</name>
    <name type="synonym">Smc3l1</name>
</gene>
<protein>
    <recommendedName>
        <fullName>Structural maintenance of chromosomes protein 3</fullName>
        <shortName>SMC protein 3</shortName>
        <shortName>SMC-3</shortName>
    </recommendedName>
    <alternativeName>
        <fullName>Basement membrane-associated chondroitin proteoglycan</fullName>
        <shortName>Bamacan</shortName>
    </alternativeName>
    <alternativeName>
        <fullName>Chondroitin sulfate proteoglycan 6</fullName>
    </alternativeName>
    <alternativeName>
        <fullName>Chromosome segregation protein SmcD</fullName>
    </alternativeName>
</protein>
<organism>
    <name type="scientific">Rattus norvegicus</name>
    <name type="common">Rat</name>
    <dbReference type="NCBI Taxonomy" id="10116"/>
    <lineage>
        <taxon>Eukaryota</taxon>
        <taxon>Metazoa</taxon>
        <taxon>Chordata</taxon>
        <taxon>Craniata</taxon>
        <taxon>Vertebrata</taxon>
        <taxon>Euteleostomi</taxon>
        <taxon>Mammalia</taxon>
        <taxon>Eutheria</taxon>
        <taxon>Euarchontoglires</taxon>
        <taxon>Glires</taxon>
        <taxon>Rodentia</taxon>
        <taxon>Myomorpha</taxon>
        <taxon>Muroidea</taxon>
        <taxon>Muridae</taxon>
        <taxon>Murinae</taxon>
        <taxon>Rattus</taxon>
    </lineage>
</organism>
<feature type="chain" id="PRO_0000119004" description="Structural maintenance of chromosomes protein 3">
    <location>
        <begin position="1"/>
        <end position="1191"/>
    </location>
</feature>
<feature type="domain" description="SMC hinge">
    <location>
        <begin position="530"/>
        <end position="642"/>
    </location>
</feature>
<feature type="region of interest" description="Disordered" evidence="6">
    <location>
        <begin position="242"/>
        <end position="268"/>
    </location>
</feature>
<feature type="region of interest" description="Disordered" evidence="6">
    <location>
        <begin position="1059"/>
        <end position="1090"/>
    </location>
</feature>
<feature type="coiled-coil region" evidence="5">
    <location>
        <begin position="173"/>
        <end position="357"/>
    </location>
</feature>
<feature type="coiled-coil region" evidence="5">
    <location>
        <begin position="389"/>
        <end position="504"/>
    </location>
</feature>
<feature type="coiled-coil region" evidence="5">
    <location>
        <begin position="668"/>
        <end position="1022"/>
    </location>
</feature>
<feature type="binding site" evidence="5">
    <location>
        <begin position="32"/>
        <end position="39"/>
    </location>
    <ligand>
        <name>ATP</name>
        <dbReference type="ChEBI" id="CHEBI:30616"/>
    </ligand>
</feature>
<feature type="modified residue" description="N6-acetyllysine" evidence="4">
    <location>
        <position position="105"/>
    </location>
</feature>
<feature type="modified residue" description="N6-acetyllysine" evidence="4">
    <location>
        <position position="106"/>
    </location>
</feature>
<feature type="modified residue" description="N6-acetyllysine" evidence="4">
    <location>
        <position position="140"/>
    </location>
</feature>
<feature type="modified residue" description="Phosphothreonine" evidence="4">
    <location>
        <position position="783"/>
    </location>
</feature>
<feature type="modified residue" description="Phosphoserine" evidence="4">
    <location>
        <position position="787"/>
    </location>
</feature>
<feature type="modified residue" description="Phosphoserine" evidence="4">
    <location>
        <position position="886"/>
    </location>
</feature>
<feature type="modified residue" description="Phosphoserine" evidence="3">
    <location>
        <position position="1013"/>
    </location>
</feature>
<feature type="modified residue" description="Phosphoserine" evidence="4">
    <location>
        <position position="1065"/>
    </location>
</feature>
<feature type="modified residue" description="Phosphoserine" evidence="9">
    <location>
        <position position="1067"/>
    </location>
</feature>
<feature type="modified residue" description="Phosphoserine" evidence="9">
    <location>
        <position position="1074"/>
    </location>
</feature>
<feature type="modified residue" description="Phosphoserine" evidence="4">
    <location>
        <position position="1083"/>
    </location>
</feature>
<sequence length="1191" mass="138448">MYIKQVIIQGFRSYRDQTIVDPFSSKHNVIVGRNGSGKSNFFYAIQFVLSDEFSHLRPEQRLALLHEGTGPRVISAFVEIIFDNSDNRLPIDKEEVSLRRVIGAKKDQYFLDKKMVTKNDVMNLLESAGFSRSNPYYIVKQGKINQMATAPDSQRLKLLREVAGTRVYDERKEESISLMKETEGKREKINELLKYIEERLHTLEEEKEELAQYQKWDKMRRALEYTIYNQELNETRAKLDELSAKRETSGEKSRQLRDAQQDARDKMEDIERQVRELKTKISAMKEEKEQLSAERQEQIKQRTKLELKAKDLQDELAGNSEQRKRLLKERQKLLEKIEEKQKELAETEPKFNSVKEKEERGIARLAQATQERTDLYAKQGRGSQFTSKEERDKWIKKELKSLDQAINDKKRQIAAIHKDLEDTEANKEKNLEQYNKLDQDLNEVKARVEELDRKYYEVKNKKDELQSERNYLWREENAEQQALAAKREDLEKKQQLLRAATGKAILNGIDSINKVLDHFRRKGINQHVQNGYHGIVMNNFECEPAFYTCVEVTAGNRLFYHIVDSDEVSTKILMEFNKMNLPGEVTFLPLNKLDVRDTAYPETNDAIPMISKLRYNPRFDKAFKHVFGKTLICRSMEVSTQLARAFTMDCITLEGDQVSHRGALTGGYYDTRKSRLELQKDVRKAEEELGELEAKLNENLRRNIERINNEIDQLMNQMQQIETQQRKFKASRDSTLSEMKMLKEKRQQSEKTFMPKQRSLQSLEASLHAMESTRESLKAELGTDLPSQLSLEDQKRVDALNDEIRQLQQKNRQLLNERIKLEGIITRVETYLNENLRKRLDQVEQELNELRETEGGTVLTATTSQLEAINKRVKDTMARSEDLDNSIDKTEAGIKELQKSMERWKNMEKEHMDAINHDTKELEKMTNRQGMLLKKKEECMKKIRELGSLPQEAFEKYQTLSLKQLFRKLEQCNTELKKYSHVNKKALDQFVNFSEQKEKLIKRQEELDRGYKSIMELMNVLELRKYEAIQLTFKQVSKNFSEVFQKLVPGAKATLVMKKGDVEGSQSQDEGEGSGESERGSGSQSSVPSVDQFTGVGIRVSFTGKQGEMREMQQLSGGQKSLVALALIFAIQKCDPAPFYLFDEIDQALDAQHRKAVSDMIMELAVHAQFITTTFRPELLESADKSSGKSE</sequence>
<comment type="function">
    <text evidence="1">Central component of cohesin, a complex required for chromosome cohesion during the cell cycle. The cohesin complex may form a large proteinaceous ring within which sister chromatids can be trapped. At anaphase, the complex is cleaved and dissociates from chromatin, allowing sister chromatids to segregate. Cohesion is coupled to DNA replication and is involved in DNA repair. The cohesin complex also plays an important role in spindle pole assembly during mitosis and in chromosomes movement (By similarity).</text>
</comment>
<comment type="subunit">
    <text evidence="2 3 4 7">Forms a heterodimer with SMC1A or SMC1B in cohesin complexes. Cohesin complexes are composed of the SMC1 (SMC1A or meiosis-specific SMC1B) and SMC3 heterodimer attached via their SMC hinge domain, RAD21 which link them, and one STAG protein (STAG1, STAG2 or STAG3), which interacts with RAD21. Also found in meiosis-specific cohesin complexes. Found in a complex with SMC1A, CDCA5 and RAD21, PDS5A/SCC-112 and PDS5B/APRIN. Interacts with MXI1, MXD3 and MXD4. Interacts with NUMA1, and forms a ternary complex with KIF3B and KIFAP3, suggesting a function in tethering the chromosomes to the spindle pole and a function in chromosome movement. Interacts with PDS5A and WAPL; regulated by SMC3 acetylation. Interacts (via SMC hinge domain) with KIAA1328 (via N- and C-terminal domains). Interacts with DDX11, RPGR and STAG3. The cohesin complex interacts with the cohesin loading complex subunits NIPBL/Scc2 (via HEAT repeats) and MAU2/Scc4. NIPBL directly contacts all members of the complex, RAD21, SMC1A/B, SMC3 and STAG1 (By similarity). Interacts with SYCP2 (PubMed:10652260). Interacts with the NuRD complex component HDAC2; the interaction is direct (By similarity).</text>
</comment>
<comment type="subcellular location">
    <subcellularLocation>
        <location evidence="3">Nucleus</location>
    </subcellularLocation>
    <subcellularLocation>
        <location evidence="3">Chromosome</location>
    </subcellularLocation>
    <subcellularLocation>
        <location evidence="3">Chromosome</location>
        <location evidence="3">Centromere</location>
    </subcellularLocation>
    <text evidence="3">Associates with chromatin. Before prophase it is scattered along chromosome arms. During prophase, most of cohesin complexes dissociate from chromatin probably because of phosphorylation by PLK, except at centromeres, where cohesin complexes remain. At anaphase, the RAD21 subunit of the cohesin complex is cleaved, leading to the dissociation of the complex from chromosomes, allowing chromosome separation (By similarity). The phosphorylated form at Ser-1083 is preferentially associated with unsynapsed chromosomal regions (By similarity).</text>
</comment>
<comment type="tissue specificity">
    <text>Ubiquitous.</text>
</comment>
<comment type="domain">
    <text evidence="1">The flexible SMC hinge domain, which separates the large intramolecular coiled coil regions, allows the heterotypic interaction with the corresponding domain of SMC1A or SMC1B, forming a V-shaped heterodimer. The two heads of the heterodimer are then connected by different ends of the cleavable RAD21 protein, forming a ring structure (By similarity).</text>
</comment>
<comment type="PTM">
    <text evidence="3">Phosphorylated at Ser-1083 in a SPO11-dependent manner.</text>
</comment>
<comment type="PTM">
    <text evidence="4">Acetylation at Lys-105 and Lys-106 by ESCO1 is important for genome stability and S phase sister chromatid cohesion. Regulated by DSCC1, it is required for processive DNA synthesis, coupling sister chromatid cohesion establishment during S phase to DNA replication (By similarity). Deacetylation by HDAC8, regulates release of the cohesin complex from chromatin (By similarity).</text>
</comment>
<comment type="PTM">
    <text evidence="4">Ubiquitinated by the DCX(DCAF15) complex, leading to its degradation.</text>
</comment>
<comment type="similarity">
    <text evidence="8">Belongs to the SMC family. SMC3 subfamily.</text>
</comment>
<comment type="caution">
    <text evidence="8">PubMed:9015313 originally reported this protein to be a proteoglycan (thus explaining its name). Although not excluded, such secreted function is not clear.</text>
</comment>
<name>SMC3_RAT</name>